<organism>
    <name type="scientific">Aquifex aeolicus (strain VF5)</name>
    <dbReference type="NCBI Taxonomy" id="224324"/>
    <lineage>
        <taxon>Bacteria</taxon>
        <taxon>Pseudomonadati</taxon>
        <taxon>Aquificota</taxon>
        <taxon>Aquificia</taxon>
        <taxon>Aquificales</taxon>
        <taxon>Aquificaceae</taxon>
        <taxon>Aquifex</taxon>
    </lineage>
</organism>
<sequence>MATEIDINRIQKDIFIEHKGEPYRVLDYEHVKPGKGQAFVRVKAKNMLTGNVTELTFKASDRIPLADFEQVYATYSYNDGENYYFMNTQTYDMIAVPKEKIEEEAKFLKEGMEVIVFLYKGQPIGIELPKHVELQVVETEPAFKGDTQAGGTKPAKLETGAVIQVPFFVKEGDIVKVDTRTGSYVERVKEAK</sequence>
<comment type="function">
    <text evidence="1">Involved in peptide bond synthesis. Stimulates efficient translation and peptide-bond synthesis on native or reconstituted 70S ribosomes in vitro. Probably functions indirectly by altering the affinity of the ribosome for aminoacyl-tRNA, thus increasing their reactivity as acceptors for peptidyl transferase (By similarity).</text>
</comment>
<comment type="pathway">
    <text>Protein biosynthesis; polypeptide chain elongation.</text>
</comment>
<comment type="subcellular location">
    <subcellularLocation>
        <location evidence="1">Cytoplasm</location>
    </subcellularLocation>
</comment>
<comment type="similarity">
    <text evidence="2">Belongs to the elongation factor P family.</text>
</comment>
<gene>
    <name type="primary">efp</name>
    <name type="ordered locus">aq_1364</name>
</gene>
<evidence type="ECO:0000250" key="1"/>
<evidence type="ECO:0000305" key="2"/>
<keyword id="KW-0963">Cytoplasm</keyword>
<keyword id="KW-0251">Elongation factor</keyword>
<keyword id="KW-0648">Protein biosynthesis</keyword>
<keyword id="KW-1185">Reference proteome</keyword>
<feature type="chain" id="PRO_0000094189" description="Elongation factor P">
    <location>
        <begin position="1"/>
        <end position="192"/>
    </location>
</feature>
<protein>
    <recommendedName>
        <fullName>Elongation factor P</fullName>
        <shortName>EF-P</shortName>
    </recommendedName>
</protein>
<name>EFP_AQUAE</name>
<dbReference type="EMBL" id="AE000657">
    <property type="protein sequence ID" value="AAC07331.1"/>
    <property type="molecule type" value="Genomic_DNA"/>
</dbReference>
<dbReference type="PIR" id="E70418">
    <property type="entry name" value="E70418"/>
</dbReference>
<dbReference type="RefSeq" id="NP_213940.1">
    <property type="nucleotide sequence ID" value="NC_000918.1"/>
</dbReference>
<dbReference type="RefSeq" id="WP_010880878.1">
    <property type="nucleotide sequence ID" value="NC_000918.1"/>
</dbReference>
<dbReference type="SMR" id="O67376"/>
<dbReference type="FunCoup" id="O67376">
    <property type="interactions" value="469"/>
</dbReference>
<dbReference type="STRING" id="224324.aq_1364"/>
<dbReference type="EnsemblBacteria" id="AAC07331">
    <property type="protein sequence ID" value="AAC07331"/>
    <property type="gene ID" value="aq_1364"/>
</dbReference>
<dbReference type="KEGG" id="aae:aq_1364"/>
<dbReference type="PATRIC" id="fig|224324.8.peg.1067"/>
<dbReference type="eggNOG" id="COG0231">
    <property type="taxonomic scope" value="Bacteria"/>
</dbReference>
<dbReference type="HOGENOM" id="CLU_074944_0_1_0"/>
<dbReference type="InParanoid" id="O67376"/>
<dbReference type="OrthoDB" id="9801844at2"/>
<dbReference type="UniPathway" id="UPA00345"/>
<dbReference type="Proteomes" id="UP000000798">
    <property type="component" value="Chromosome"/>
</dbReference>
<dbReference type="GO" id="GO:0005737">
    <property type="term" value="C:cytoplasm"/>
    <property type="evidence" value="ECO:0000318"/>
    <property type="project" value="GO_Central"/>
</dbReference>
<dbReference type="GO" id="GO:0003746">
    <property type="term" value="F:translation elongation factor activity"/>
    <property type="evidence" value="ECO:0000318"/>
    <property type="project" value="GO_Central"/>
</dbReference>
<dbReference type="GO" id="GO:0043043">
    <property type="term" value="P:peptide biosynthetic process"/>
    <property type="evidence" value="ECO:0007669"/>
    <property type="project" value="InterPro"/>
</dbReference>
<dbReference type="CDD" id="cd04470">
    <property type="entry name" value="S1_EF-P_repeat_1"/>
    <property type="match status" value="1"/>
</dbReference>
<dbReference type="CDD" id="cd05794">
    <property type="entry name" value="S1_EF-P_repeat_2"/>
    <property type="match status" value="1"/>
</dbReference>
<dbReference type="FunFam" id="2.30.30.30:FF:000003">
    <property type="entry name" value="Elongation factor P"/>
    <property type="match status" value="1"/>
</dbReference>
<dbReference type="FunFam" id="2.40.50.140:FF:000004">
    <property type="entry name" value="Elongation factor P"/>
    <property type="match status" value="1"/>
</dbReference>
<dbReference type="FunFam" id="2.40.50.140:FF:000009">
    <property type="entry name" value="Elongation factor P"/>
    <property type="match status" value="1"/>
</dbReference>
<dbReference type="Gene3D" id="2.30.30.30">
    <property type="match status" value="1"/>
</dbReference>
<dbReference type="Gene3D" id="2.40.50.140">
    <property type="entry name" value="Nucleic acid-binding proteins"/>
    <property type="match status" value="2"/>
</dbReference>
<dbReference type="HAMAP" id="MF_00141">
    <property type="entry name" value="EF_P"/>
    <property type="match status" value="1"/>
</dbReference>
<dbReference type="InterPro" id="IPR015365">
    <property type="entry name" value="Elong-fact-P_C"/>
</dbReference>
<dbReference type="InterPro" id="IPR012340">
    <property type="entry name" value="NA-bd_OB-fold"/>
</dbReference>
<dbReference type="InterPro" id="IPR014722">
    <property type="entry name" value="Rib_uL2_dom2"/>
</dbReference>
<dbReference type="InterPro" id="IPR020599">
    <property type="entry name" value="Transl_elong_fac_P/YeiP"/>
</dbReference>
<dbReference type="InterPro" id="IPR013185">
    <property type="entry name" value="Transl_elong_KOW-like"/>
</dbReference>
<dbReference type="InterPro" id="IPR001059">
    <property type="entry name" value="Transl_elong_P/YeiP_cen"/>
</dbReference>
<dbReference type="InterPro" id="IPR013852">
    <property type="entry name" value="Transl_elong_P/YeiP_CS"/>
</dbReference>
<dbReference type="InterPro" id="IPR011768">
    <property type="entry name" value="Transl_elongation_fac_P"/>
</dbReference>
<dbReference type="InterPro" id="IPR008991">
    <property type="entry name" value="Translation_prot_SH3-like_sf"/>
</dbReference>
<dbReference type="NCBIfam" id="TIGR00038">
    <property type="entry name" value="efp"/>
    <property type="match status" value="1"/>
</dbReference>
<dbReference type="NCBIfam" id="NF001810">
    <property type="entry name" value="PRK00529.1"/>
    <property type="match status" value="1"/>
</dbReference>
<dbReference type="PANTHER" id="PTHR30053">
    <property type="entry name" value="ELONGATION FACTOR P"/>
    <property type="match status" value="1"/>
</dbReference>
<dbReference type="PANTHER" id="PTHR30053:SF12">
    <property type="entry name" value="ELONGATION FACTOR P (EF-P) FAMILY PROTEIN"/>
    <property type="match status" value="1"/>
</dbReference>
<dbReference type="Pfam" id="PF01132">
    <property type="entry name" value="EFP"/>
    <property type="match status" value="1"/>
</dbReference>
<dbReference type="Pfam" id="PF08207">
    <property type="entry name" value="EFP_N"/>
    <property type="match status" value="1"/>
</dbReference>
<dbReference type="Pfam" id="PF09285">
    <property type="entry name" value="Elong-fact-P_C"/>
    <property type="match status" value="1"/>
</dbReference>
<dbReference type="PIRSF" id="PIRSF005901">
    <property type="entry name" value="EF-P"/>
    <property type="match status" value="1"/>
</dbReference>
<dbReference type="SMART" id="SM01185">
    <property type="entry name" value="EFP"/>
    <property type="match status" value="1"/>
</dbReference>
<dbReference type="SMART" id="SM00841">
    <property type="entry name" value="Elong-fact-P_C"/>
    <property type="match status" value="1"/>
</dbReference>
<dbReference type="SUPFAM" id="SSF50249">
    <property type="entry name" value="Nucleic acid-binding proteins"/>
    <property type="match status" value="2"/>
</dbReference>
<dbReference type="SUPFAM" id="SSF50104">
    <property type="entry name" value="Translation proteins SH3-like domain"/>
    <property type="match status" value="1"/>
</dbReference>
<dbReference type="PROSITE" id="PS01275">
    <property type="entry name" value="EFP"/>
    <property type="match status" value="1"/>
</dbReference>
<reference key="1">
    <citation type="journal article" date="1998" name="Nature">
        <title>The complete genome of the hyperthermophilic bacterium Aquifex aeolicus.</title>
        <authorList>
            <person name="Deckert G."/>
            <person name="Warren P.V."/>
            <person name="Gaasterland T."/>
            <person name="Young W.G."/>
            <person name="Lenox A.L."/>
            <person name="Graham D.E."/>
            <person name="Overbeek R."/>
            <person name="Snead M.A."/>
            <person name="Keller M."/>
            <person name="Aujay M."/>
            <person name="Huber R."/>
            <person name="Feldman R.A."/>
            <person name="Short J.M."/>
            <person name="Olsen G.J."/>
            <person name="Swanson R.V."/>
        </authorList>
    </citation>
    <scope>NUCLEOTIDE SEQUENCE [LARGE SCALE GENOMIC DNA]</scope>
    <source>
        <strain>VF5</strain>
    </source>
</reference>
<proteinExistence type="inferred from homology"/>
<accession>O67376</accession>